<feature type="chain" id="PRO_0000344058" description="tRNA (32-2'-O)-methyltransferase regulator THADA">
    <location>
        <begin position="1"/>
        <end position="1938"/>
    </location>
</feature>
<feature type="coiled-coil region" evidence="2">
    <location>
        <begin position="877"/>
        <end position="909"/>
    </location>
</feature>
<feature type="modified residue" description="Phosphoserine" evidence="6">
    <location>
        <position position="1006"/>
    </location>
</feature>
<feature type="modified residue" description="Phosphoserine" evidence="1">
    <location>
        <position position="1015"/>
    </location>
</feature>
<feature type="modified residue" description="Phosphoserine" evidence="1">
    <location>
        <position position="1152"/>
    </location>
</feature>
<feature type="splice variant" id="VSP_034740" description="In isoform 5." evidence="4">
    <location>
        <begin position="1"/>
        <end position="1576"/>
    </location>
</feature>
<feature type="splice variant" id="VSP_034736" description="In isoform 3." evidence="4">
    <location>
        <begin position="1"/>
        <end position="1438"/>
    </location>
</feature>
<feature type="splice variant" id="VSP_034737" description="In isoform 2." evidence="3">
    <location>
        <begin position="1"/>
        <end position="1270"/>
    </location>
</feature>
<feature type="splice variant" id="VSP_034738" description="In isoform 4." evidence="4">
    <original>I</original>
    <variation>V</variation>
    <location>
        <position position="347"/>
    </location>
</feature>
<feature type="splice variant" id="VSP_034739" description="In isoform 4." evidence="4">
    <location>
        <begin position="348"/>
        <end position="1938"/>
    </location>
</feature>
<feature type="sequence conflict" description="In Ref. 2; BAE33129." evidence="5" ref="2">
    <original>G</original>
    <variation>V</variation>
    <location>
        <position position="1749"/>
    </location>
</feature>
<feature type="sequence conflict" description="In Ref. 3; AAH52885." evidence="5" ref="3">
    <original>N</original>
    <variation>S</variation>
    <location>
        <position position="1750"/>
    </location>
</feature>
<feature type="sequence conflict" description="In Ref. 2; BAE33129." evidence="5" ref="2">
    <original>F</original>
    <variation>S</variation>
    <location>
        <position position="1759"/>
    </location>
</feature>
<feature type="sequence conflict" description="In Ref. 2; BAE33129." evidence="5" ref="2">
    <original>E</original>
    <variation>G</variation>
    <location>
        <position position="1925"/>
    </location>
</feature>
<proteinExistence type="evidence at protein level"/>
<name>THADA_MOUSE</name>
<gene>
    <name type="primary">Thada</name>
    <name type="synonym">Kiaa1767</name>
</gene>
<accession>A8C756</accession>
<accession>Q3TDR4</accession>
<accession>Q3U2L1</accession>
<accession>Q69ZA8</accession>
<accession>Q7TPV7</accession>
<accession>Q8C8S7</accession>
<comment type="function">
    <text evidence="1">Together with methyltransferase FTSJ1, methylates the 2'-O-ribose of nucleotides at position 32 of the anticodon loop of substrate tRNAs.</text>
</comment>
<comment type="alternative products">
    <event type="alternative splicing"/>
    <isoform>
        <id>A8C756-1</id>
        <name>1</name>
        <sequence type="displayed"/>
    </isoform>
    <isoform>
        <id>A8C756-2</id>
        <name>2</name>
        <sequence type="described" ref="VSP_034737"/>
    </isoform>
    <isoform>
        <id>A8C756-3</id>
        <name>3</name>
        <sequence type="described" ref="VSP_034736"/>
    </isoform>
    <isoform>
        <id>A8C756-4</id>
        <name>4</name>
        <sequence type="described" ref="VSP_034738 VSP_034739"/>
    </isoform>
    <isoform>
        <id>A8C756-5</id>
        <name>5</name>
        <sequence type="described" ref="VSP_034740"/>
    </isoform>
</comment>
<comment type="similarity">
    <text evidence="5">Belongs to the THADA family.</text>
</comment>
<comment type="sequence caution" evidence="5">
    <conflict type="miscellaneous discrepancy">
        <sequence resource="EMBL-CDS" id="BAD32536"/>
    </conflict>
    <text>Intron retention.</text>
</comment>
<comment type="sequence caution" evidence="5">
    <conflict type="erroneous termination">
        <sequence resource="EMBL-CDS" id="BAE33129"/>
    </conflict>
    <text>Truncated C-terminus.</text>
</comment>
<comment type="sequence caution" evidence="5">
    <conflict type="frameshift">
        <sequence resource="EMBL-CDS" id="BAE41536"/>
    </conflict>
</comment>
<sequence>MGVKKKREMQVAALTVCHQDMETLRSFADMEGKNLASLLLHCVQLTDGVSQIHSIKQIVPLLEKVDKNGVCDPAIQSCLDILAGIYFSLTLKNPLKKVLASSLNGLPEVFLTQATHSFTFHLQEELDTADLYSYRKVMDNISSCMENFNLGRASVVNLLKDVLHFLQKSLIEILEENRKFAGNRIVQTQLMSDLLVGVRVAMTLVQKVQGPQGSLWNDSSSPIWQSMCGLLSIFTKFLNDDDLLQTVESTSGLAVILFIKTMFRPSEKLPGLISSLLLRSAECTSIPEWLMNSCRSLCCTDVPASTLLFLCQGTLAMLDWQDGSMGPSGEALLLDIVHVLFTLSSQIKESTLDMFLSRILASWTSSAIQILESGSSGLKGHLNGDSCVPRRLLEYVYTHWEHPLDALRHQTKVMFRNLLQMHRLTMEGADLATDPFCLELTKSLLQLEWHIKGKYACLGCLVETLGIEHILAIDKTIPSQILEVMGDQSLVPYASDLLETMFKNHKSHLKSQTVTNTWMDKWHETWVFPVLSVLCGGNLDQRSYVIDYYLPRILNYSPESLHYMVHILQASTDTGTGSCNHRGALGALMACLRTARAHGHLQSATQAWENLVCSARVKQGLIHQHCQVRIDTLGLLCESNRSTEVVSTEEMQWVQFFITYNLNSQSPGVRQQICSLLKKLFCRIQESSQVLYKLEQRKSTPDSENGSIREQPSVTLQQYKNFMSSVCNILFEALFPGSSYSTRFSALTILGSVAEVFPDPEGNIQTVYQLSHDIDAGRYQILMECFTSTFEEVKTLAFDLLMKLSSVTAGQFQDSEKLQDLFQAALELSTSTKPYDCVTASYLLNLLIRQDALPAVLSASSPQQLTRGAGETSAVLERNTLVVIKCLMENLEDEISQAENSLLQAASSFPMYGRVHCITRAFQRLPLNDLRLASEWRPLLGRLLLLSYRLSTVVAPVIQSSSPEGLIPVDTDSASASRLQLILNEIQPRDTNDYFNHTKILKECDSFDLEDLSTSVSNIDSSAEVKGKEEKACDVTAQMVLACCWRSMKEVALLLGTLCQLLPVQPGPESSNVFLTVQQVKEIGDYFKQHLLQSRHRGAFELAYTGFVKLTEILNRCSNVSLQKLPEQWLRSVLEEIKGSDPSSKLCATRRSAGIPFYIQALLASEPKKSRMDLLKITMRELISLALSADDSKGRVPQVHALNILRALFRDTRLGENIIPYVAGGAKAAILGFTSPVWAVRNSSTLLFSSLITRVFGVKRGKDEVSKTNRMTGREFFSRFPELYPFLLKQLETVASTVDSELGEPDRHPGMFLLLLVLERLYPSPMDGTSSALSLAPFVPFIIRCGRSPIYRSREMAARALVPFIMIDQIPSTLCALLNSLPNSTDQCFRQNHIHGTLLQVFHLLQAYITDCRHRTNADFLQELSDVTACTKAKLWLAMRQNPCLVTRAVYIDILFLLTNCLDRPEEGKQTALESLGFWEDVRRIILESELIKGFPWTFKVPGLPQYLQSLTKLAIPEVWASLAEAKGQATAVPLSFSRLLKSSFPEVRLLALDTLLERARSSEQEQKEPLPLLCSMGEELLLLAMKEDHPGCFCRVLKILYHLNPSEWLPQTECYAHLSPKEFLMWSMDIASNDRSEIQGVALKLASKIIAYRVQSCEKNKDSLAPELRQWVQLVVWSCGDHLPTASRLAVAEVLTSTAPLFLTSPQPILELQGTLSLWRCVLTLLQSEEQTVREAATEIVTTAMSQGNTCQSTEFAFCQVDASIALTLALAVLCDLLQQWDQLEPGLPILLGWLLEEGDDLEGHVQSPHQGEEEHIFEKSEVNFWAETLTFVKSLCRQLFHLLCQSGWQSPHSQKLCHLQRIASEQSHLISQLFRELPLSAEFLKTVEYTRLRIQEERTLAVLRLLACLEGKEGLRAEDCPREWRQVMAPRTEAAC</sequence>
<reference key="1">
    <citation type="journal article" date="2007" name="Gene">
        <title>A domain of the thyroid adenoma associated gene (THADA) conserved in vertebrates becomes destroyed by chromosomal rearrangements observed in thyroid adenomas.</title>
        <authorList>
            <person name="Drieschner N."/>
            <person name="Kerschling S."/>
            <person name="Soller J.T."/>
            <person name="Rippe V."/>
            <person name="Belge G."/>
            <person name="Bullerdiek J."/>
            <person name="Nimzyk R."/>
        </authorList>
    </citation>
    <scope>NUCLEOTIDE SEQUENCE [MRNA] (ISOFORM 1)</scope>
</reference>
<reference key="2">
    <citation type="journal article" date="2005" name="Science">
        <title>The transcriptional landscape of the mammalian genome.</title>
        <authorList>
            <person name="Carninci P."/>
            <person name="Kasukawa T."/>
            <person name="Katayama S."/>
            <person name="Gough J."/>
            <person name="Frith M.C."/>
            <person name="Maeda N."/>
            <person name="Oyama R."/>
            <person name="Ravasi T."/>
            <person name="Lenhard B."/>
            <person name="Wells C."/>
            <person name="Kodzius R."/>
            <person name="Shimokawa K."/>
            <person name="Bajic V.B."/>
            <person name="Brenner S.E."/>
            <person name="Batalov S."/>
            <person name="Forrest A.R."/>
            <person name="Zavolan M."/>
            <person name="Davis M.J."/>
            <person name="Wilming L.G."/>
            <person name="Aidinis V."/>
            <person name="Allen J.E."/>
            <person name="Ambesi-Impiombato A."/>
            <person name="Apweiler R."/>
            <person name="Aturaliya R.N."/>
            <person name="Bailey T.L."/>
            <person name="Bansal M."/>
            <person name="Baxter L."/>
            <person name="Beisel K.W."/>
            <person name="Bersano T."/>
            <person name="Bono H."/>
            <person name="Chalk A.M."/>
            <person name="Chiu K.P."/>
            <person name="Choudhary V."/>
            <person name="Christoffels A."/>
            <person name="Clutterbuck D.R."/>
            <person name="Crowe M.L."/>
            <person name="Dalla E."/>
            <person name="Dalrymple B.P."/>
            <person name="de Bono B."/>
            <person name="Della Gatta G."/>
            <person name="di Bernardo D."/>
            <person name="Down T."/>
            <person name="Engstrom P."/>
            <person name="Fagiolini M."/>
            <person name="Faulkner G."/>
            <person name="Fletcher C.F."/>
            <person name="Fukushima T."/>
            <person name="Furuno M."/>
            <person name="Futaki S."/>
            <person name="Gariboldi M."/>
            <person name="Georgii-Hemming P."/>
            <person name="Gingeras T.R."/>
            <person name="Gojobori T."/>
            <person name="Green R.E."/>
            <person name="Gustincich S."/>
            <person name="Harbers M."/>
            <person name="Hayashi Y."/>
            <person name="Hensch T.K."/>
            <person name="Hirokawa N."/>
            <person name="Hill D."/>
            <person name="Huminiecki L."/>
            <person name="Iacono M."/>
            <person name="Ikeo K."/>
            <person name="Iwama A."/>
            <person name="Ishikawa T."/>
            <person name="Jakt M."/>
            <person name="Kanapin A."/>
            <person name="Katoh M."/>
            <person name="Kawasawa Y."/>
            <person name="Kelso J."/>
            <person name="Kitamura H."/>
            <person name="Kitano H."/>
            <person name="Kollias G."/>
            <person name="Krishnan S.P."/>
            <person name="Kruger A."/>
            <person name="Kummerfeld S.K."/>
            <person name="Kurochkin I.V."/>
            <person name="Lareau L.F."/>
            <person name="Lazarevic D."/>
            <person name="Lipovich L."/>
            <person name="Liu J."/>
            <person name="Liuni S."/>
            <person name="McWilliam S."/>
            <person name="Madan Babu M."/>
            <person name="Madera M."/>
            <person name="Marchionni L."/>
            <person name="Matsuda H."/>
            <person name="Matsuzawa S."/>
            <person name="Miki H."/>
            <person name="Mignone F."/>
            <person name="Miyake S."/>
            <person name="Morris K."/>
            <person name="Mottagui-Tabar S."/>
            <person name="Mulder N."/>
            <person name="Nakano N."/>
            <person name="Nakauchi H."/>
            <person name="Ng P."/>
            <person name="Nilsson R."/>
            <person name="Nishiguchi S."/>
            <person name="Nishikawa S."/>
            <person name="Nori F."/>
            <person name="Ohara O."/>
            <person name="Okazaki Y."/>
            <person name="Orlando V."/>
            <person name="Pang K.C."/>
            <person name="Pavan W.J."/>
            <person name="Pavesi G."/>
            <person name="Pesole G."/>
            <person name="Petrovsky N."/>
            <person name="Piazza S."/>
            <person name="Reed J."/>
            <person name="Reid J.F."/>
            <person name="Ring B.Z."/>
            <person name="Ringwald M."/>
            <person name="Rost B."/>
            <person name="Ruan Y."/>
            <person name="Salzberg S.L."/>
            <person name="Sandelin A."/>
            <person name="Schneider C."/>
            <person name="Schoenbach C."/>
            <person name="Sekiguchi K."/>
            <person name="Semple C.A."/>
            <person name="Seno S."/>
            <person name="Sessa L."/>
            <person name="Sheng Y."/>
            <person name="Shibata Y."/>
            <person name="Shimada H."/>
            <person name="Shimada K."/>
            <person name="Silva D."/>
            <person name="Sinclair B."/>
            <person name="Sperling S."/>
            <person name="Stupka E."/>
            <person name="Sugiura K."/>
            <person name="Sultana R."/>
            <person name="Takenaka Y."/>
            <person name="Taki K."/>
            <person name="Tammoja K."/>
            <person name="Tan S.L."/>
            <person name="Tang S."/>
            <person name="Taylor M.S."/>
            <person name="Tegner J."/>
            <person name="Teichmann S.A."/>
            <person name="Ueda H.R."/>
            <person name="van Nimwegen E."/>
            <person name="Verardo R."/>
            <person name="Wei C.L."/>
            <person name="Yagi K."/>
            <person name="Yamanishi H."/>
            <person name="Zabarovsky E."/>
            <person name="Zhu S."/>
            <person name="Zimmer A."/>
            <person name="Hide W."/>
            <person name="Bult C."/>
            <person name="Grimmond S.M."/>
            <person name="Teasdale R.D."/>
            <person name="Liu E.T."/>
            <person name="Brusic V."/>
            <person name="Quackenbush J."/>
            <person name="Wahlestedt C."/>
            <person name="Mattick J.S."/>
            <person name="Hume D.A."/>
            <person name="Kai C."/>
            <person name="Sasaki D."/>
            <person name="Tomaru Y."/>
            <person name="Fukuda S."/>
            <person name="Kanamori-Katayama M."/>
            <person name="Suzuki M."/>
            <person name="Aoki J."/>
            <person name="Arakawa T."/>
            <person name="Iida J."/>
            <person name="Imamura K."/>
            <person name="Itoh M."/>
            <person name="Kato T."/>
            <person name="Kawaji H."/>
            <person name="Kawagashira N."/>
            <person name="Kawashima T."/>
            <person name="Kojima M."/>
            <person name="Kondo S."/>
            <person name="Konno H."/>
            <person name="Nakano K."/>
            <person name="Ninomiya N."/>
            <person name="Nishio T."/>
            <person name="Okada M."/>
            <person name="Plessy C."/>
            <person name="Shibata K."/>
            <person name="Shiraki T."/>
            <person name="Suzuki S."/>
            <person name="Tagami M."/>
            <person name="Waki K."/>
            <person name="Watahiki A."/>
            <person name="Okamura-Oho Y."/>
            <person name="Suzuki H."/>
            <person name="Kawai J."/>
            <person name="Hayashizaki Y."/>
        </authorList>
    </citation>
    <scope>NUCLEOTIDE SEQUENCE [LARGE SCALE MRNA] (ISOFORMS 3; 4 AND 5)</scope>
    <source>
        <strain>C57BL/6J</strain>
        <strain>NOD</strain>
        <tissue>Retina</tissue>
    </source>
</reference>
<reference key="3">
    <citation type="journal article" date="2004" name="Genome Res.">
        <title>The status, quality, and expansion of the NIH full-length cDNA project: the Mammalian Gene Collection (MGC).</title>
        <authorList>
            <consortium name="The MGC Project Team"/>
        </authorList>
    </citation>
    <scope>NUCLEOTIDE SEQUENCE [LARGE SCALE MRNA] (ISOFORM 2)</scope>
    <source>
        <strain>C57BL/6J</strain>
        <tissue>Egg</tissue>
    </source>
</reference>
<reference key="4">
    <citation type="journal article" date="2004" name="DNA Res.">
        <title>Prediction of the coding sequences of mouse homologues of KIAA gene: IV. The complete nucleotide sequences of 500 mouse KIAA-homologous cDNAs identified by screening of terminal sequences of cDNA clones randomly sampled from size-fractionated libraries.</title>
        <authorList>
            <person name="Okazaki N."/>
            <person name="Kikuno R."/>
            <person name="Ohara R."/>
            <person name="Inamoto S."/>
            <person name="Koseki H."/>
            <person name="Hiraoka S."/>
            <person name="Saga Y."/>
            <person name="Seino S."/>
            <person name="Nishimura M."/>
            <person name="Kaisho T."/>
            <person name="Hoshino K."/>
            <person name="Kitamura H."/>
            <person name="Nagase T."/>
            <person name="Ohara O."/>
            <person name="Koga H."/>
        </authorList>
    </citation>
    <scope>NUCLEOTIDE SEQUENCE [LARGE SCALE MRNA] OF 770-1440</scope>
    <source>
        <tissue>Embryo</tissue>
    </source>
</reference>
<reference key="5">
    <citation type="journal article" date="2010" name="Cell">
        <title>A tissue-specific atlas of mouse protein phosphorylation and expression.</title>
        <authorList>
            <person name="Huttlin E.L."/>
            <person name="Jedrychowski M.P."/>
            <person name="Elias J.E."/>
            <person name="Goswami T."/>
            <person name="Rad R."/>
            <person name="Beausoleil S.A."/>
            <person name="Villen J."/>
            <person name="Haas W."/>
            <person name="Sowa M.E."/>
            <person name="Gygi S.P."/>
        </authorList>
    </citation>
    <scope>PHOSPHORYLATION [LARGE SCALE ANALYSIS] AT SER-1006</scope>
    <scope>IDENTIFICATION BY MASS SPECTROMETRY [LARGE SCALE ANALYSIS]</scope>
    <source>
        <tissue>Brain</tissue>
        <tissue>Heart</tissue>
        <tissue>Kidney</tissue>
        <tissue>Lung</tissue>
        <tissue>Pancreas</tissue>
        <tissue>Spleen</tissue>
        <tissue>Testis</tissue>
    </source>
</reference>
<protein>
    <recommendedName>
        <fullName evidence="5">tRNA (32-2'-O)-methyltransferase regulator THADA</fullName>
    </recommendedName>
    <alternativeName>
        <fullName>Thyroid adenoma-associated protein homolog</fullName>
    </alternativeName>
</protein>
<organism>
    <name type="scientific">Mus musculus</name>
    <name type="common">Mouse</name>
    <dbReference type="NCBI Taxonomy" id="10090"/>
    <lineage>
        <taxon>Eukaryota</taxon>
        <taxon>Metazoa</taxon>
        <taxon>Chordata</taxon>
        <taxon>Craniata</taxon>
        <taxon>Vertebrata</taxon>
        <taxon>Euteleostomi</taxon>
        <taxon>Mammalia</taxon>
        <taxon>Eutheria</taxon>
        <taxon>Euarchontoglires</taxon>
        <taxon>Glires</taxon>
        <taxon>Rodentia</taxon>
        <taxon>Myomorpha</taxon>
        <taxon>Muroidea</taxon>
        <taxon>Muridae</taxon>
        <taxon>Murinae</taxon>
        <taxon>Mus</taxon>
        <taxon>Mus</taxon>
    </lineage>
</organism>
<evidence type="ECO:0000250" key="1">
    <source>
        <dbReference type="UniProtKB" id="Q6YHU6"/>
    </source>
</evidence>
<evidence type="ECO:0000255" key="2"/>
<evidence type="ECO:0000303" key="3">
    <source>
    </source>
</evidence>
<evidence type="ECO:0000303" key="4">
    <source>
    </source>
</evidence>
<evidence type="ECO:0000305" key="5"/>
<evidence type="ECO:0007744" key="6">
    <source>
    </source>
</evidence>
<dbReference type="EMBL" id="EF222207">
    <property type="protein sequence ID" value="ABQ10601.1"/>
    <property type="molecule type" value="mRNA"/>
</dbReference>
<dbReference type="EMBL" id="AK044550">
    <property type="protein sequence ID" value="BAC31976.1"/>
    <property type="molecule type" value="mRNA"/>
</dbReference>
<dbReference type="EMBL" id="AK155218">
    <property type="protein sequence ID" value="BAE33129.1"/>
    <property type="status" value="ALT_SEQ"/>
    <property type="molecule type" value="mRNA"/>
</dbReference>
<dbReference type="EMBL" id="AK170056">
    <property type="protein sequence ID" value="BAE41536.1"/>
    <property type="status" value="ALT_FRAME"/>
    <property type="molecule type" value="mRNA"/>
</dbReference>
<dbReference type="EMBL" id="BC052885">
    <property type="protein sequence ID" value="AAH52885.1"/>
    <property type="molecule type" value="mRNA"/>
</dbReference>
<dbReference type="EMBL" id="AK173258">
    <property type="protein sequence ID" value="BAD32536.1"/>
    <property type="status" value="ALT_SEQ"/>
    <property type="molecule type" value="mRNA"/>
</dbReference>
<dbReference type="CCDS" id="CCDS50198.1">
    <molecule id="A8C756-1"/>
</dbReference>
<dbReference type="RefSeq" id="NP_001413167.1">
    <molecule id="A8C756-1"/>
    <property type="nucleotide sequence ID" value="NM_001426238.1"/>
</dbReference>
<dbReference type="RefSeq" id="NP_898842.2">
    <molecule id="A8C756-1"/>
    <property type="nucleotide sequence ID" value="NM_183021.3"/>
</dbReference>
<dbReference type="RefSeq" id="XP_006524337.2">
    <property type="nucleotide sequence ID" value="XM_006524274.3"/>
</dbReference>
<dbReference type="RefSeq" id="XP_006524339.1">
    <molecule id="A8C756-1"/>
    <property type="nucleotide sequence ID" value="XM_006524276.5"/>
</dbReference>
<dbReference type="RefSeq" id="XP_017172962.1">
    <property type="nucleotide sequence ID" value="XM_017317473.1"/>
</dbReference>
<dbReference type="SMR" id="A8C756"/>
<dbReference type="BioGRID" id="232178">
    <property type="interactions" value="3"/>
</dbReference>
<dbReference type="FunCoup" id="A8C756">
    <property type="interactions" value="3696"/>
</dbReference>
<dbReference type="IntAct" id="A8C756">
    <property type="interactions" value="1"/>
</dbReference>
<dbReference type="STRING" id="10090.ENSMUSP00000041701"/>
<dbReference type="iPTMnet" id="A8C756"/>
<dbReference type="PhosphoSitePlus" id="A8C756"/>
<dbReference type="SwissPalm" id="A8C756"/>
<dbReference type="PaxDb" id="10090-ENSMUSP00000041701"/>
<dbReference type="PeptideAtlas" id="A8C756"/>
<dbReference type="ProteomicsDB" id="262908">
    <molecule id="A8C756-1"/>
</dbReference>
<dbReference type="ProteomicsDB" id="262909">
    <molecule id="A8C756-2"/>
</dbReference>
<dbReference type="ProteomicsDB" id="262910">
    <molecule id="A8C756-3"/>
</dbReference>
<dbReference type="ProteomicsDB" id="262911">
    <molecule id="A8C756-4"/>
</dbReference>
<dbReference type="ProteomicsDB" id="262912">
    <molecule id="A8C756-5"/>
</dbReference>
<dbReference type="Pumba" id="A8C756"/>
<dbReference type="Antibodypedia" id="47396">
    <property type="antibodies" value="109 antibodies from 21 providers"/>
</dbReference>
<dbReference type="Ensembl" id="ENSMUST00000047524.10">
    <molecule id="A8C756-1"/>
    <property type="protein sequence ID" value="ENSMUSP00000041701.9"/>
    <property type="gene ID" value="ENSMUSG00000024251.11"/>
</dbReference>
<dbReference type="GeneID" id="240174"/>
<dbReference type="KEGG" id="mmu:240174"/>
<dbReference type="UCSC" id="uc008dsr.2">
    <molecule id="A8C756-3"/>
    <property type="organism name" value="mouse"/>
</dbReference>
<dbReference type="UCSC" id="uc008dss.2">
    <molecule id="A8C756-2"/>
    <property type="organism name" value="mouse"/>
</dbReference>
<dbReference type="UCSC" id="uc012axy.1">
    <molecule id="A8C756-1"/>
    <property type="organism name" value="mouse"/>
</dbReference>
<dbReference type="AGR" id="MGI:3039623"/>
<dbReference type="CTD" id="63892"/>
<dbReference type="MGI" id="MGI:3039623">
    <property type="gene designation" value="Thada"/>
</dbReference>
<dbReference type="VEuPathDB" id="HostDB:ENSMUSG00000024251"/>
<dbReference type="eggNOG" id="KOG1810">
    <property type="taxonomic scope" value="Eukaryota"/>
</dbReference>
<dbReference type="GeneTree" id="ENSGT00390000015500"/>
<dbReference type="HOGENOM" id="CLU_002048_0_0_1"/>
<dbReference type="InParanoid" id="A8C756"/>
<dbReference type="OMA" id="CTSIPEW"/>
<dbReference type="OrthoDB" id="73997at2759"/>
<dbReference type="PhylomeDB" id="A8C756"/>
<dbReference type="TreeFam" id="TF319713"/>
<dbReference type="BioGRID-ORCS" id="240174">
    <property type="hits" value="2 hits in 76 CRISPR screens"/>
</dbReference>
<dbReference type="ChiTaRS" id="Thada">
    <property type="organism name" value="mouse"/>
</dbReference>
<dbReference type="PRO" id="PR:A8C756"/>
<dbReference type="Proteomes" id="UP000000589">
    <property type="component" value="Chromosome 17"/>
</dbReference>
<dbReference type="RNAct" id="A8C756">
    <property type="molecule type" value="protein"/>
</dbReference>
<dbReference type="Bgee" id="ENSMUSG00000024251">
    <property type="expression patterns" value="Expressed in animal zygote and 178 other cell types or tissues"/>
</dbReference>
<dbReference type="GO" id="GO:0005783">
    <property type="term" value="C:endoplasmic reticulum"/>
    <property type="evidence" value="ECO:0007669"/>
    <property type="project" value="GOC"/>
</dbReference>
<dbReference type="GO" id="GO:0030234">
    <property type="term" value="F:enzyme regulator activity"/>
    <property type="evidence" value="ECO:0007669"/>
    <property type="project" value="Ensembl"/>
</dbReference>
<dbReference type="GO" id="GO:0055088">
    <property type="term" value="P:lipid homeostasis"/>
    <property type="evidence" value="ECO:0007669"/>
    <property type="project" value="Ensembl"/>
</dbReference>
<dbReference type="GO" id="GO:0032471">
    <property type="term" value="P:negative regulation of endoplasmic reticulum calcium ion concentration"/>
    <property type="evidence" value="ECO:0007669"/>
    <property type="project" value="Ensembl"/>
</dbReference>
<dbReference type="GO" id="GO:0002128">
    <property type="term" value="P:tRNA nucleoside ribose methylation"/>
    <property type="evidence" value="ECO:0000250"/>
    <property type="project" value="UniProtKB"/>
</dbReference>
<dbReference type="InterPro" id="IPR016024">
    <property type="entry name" value="ARM-type_fold"/>
</dbReference>
<dbReference type="InterPro" id="IPR056843">
    <property type="entry name" value="THADA-like_TPR"/>
</dbReference>
<dbReference type="InterPro" id="IPR056842">
    <property type="entry name" value="THADA-like_TPR_C"/>
</dbReference>
<dbReference type="InterPro" id="IPR019442">
    <property type="entry name" value="THADA/TRM732_DUF2428"/>
</dbReference>
<dbReference type="InterPro" id="IPR051954">
    <property type="entry name" value="tRNA_methyltransferase_THADA"/>
</dbReference>
<dbReference type="PANTHER" id="PTHR14387">
    <property type="entry name" value="THADA/DEATH RECEPTOR INTERACTING PROTEIN"/>
    <property type="match status" value="1"/>
</dbReference>
<dbReference type="PANTHER" id="PTHR14387:SF7">
    <property type="entry name" value="THYROID ADENOMA-ASSOCIATED PROTEIN"/>
    <property type="match status" value="1"/>
</dbReference>
<dbReference type="Pfam" id="PF10350">
    <property type="entry name" value="DUF2428"/>
    <property type="match status" value="1"/>
</dbReference>
<dbReference type="Pfam" id="PF25150">
    <property type="entry name" value="TPR_Trm732"/>
    <property type="match status" value="1"/>
</dbReference>
<dbReference type="Pfam" id="PF25151">
    <property type="entry name" value="TPR_Trm732_C"/>
    <property type="match status" value="1"/>
</dbReference>
<dbReference type="SUPFAM" id="SSF48371">
    <property type="entry name" value="ARM repeat"/>
    <property type="match status" value="2"/>
</dbReference>
<keyword id="KW-0025">Alternative splicing</keyword>
<keyword id="KW-0175">Coiled coil</keyword>
<keyword id="KW-0597">Phosphoprotein</keyword>
<keyword id="KW-1185">Reference proteome</keyword>
<keyword id="KW-0819">tRNA processing</keyword>